<comment type="function">
    <text evidence="1">Catalyzes the GTP-dependent ribosomal translocation step during translation elongation. During this step, the ribosome changes from the pre-translocational (PRE) to the post-translocational (POST) state as the newly formed A-site-bound peptidyl-tRNA and P-site-bound deacylated tRNA move to the P and E sites, respectively. Catalyzes the coordinated movement of the two tRNA molecules, the mRNA and conformational changes in the ribosome.</text>
</comment>
<comment type="catalytic activity">
    <reaction evidence="1">
        <text>GTP + H2O = GDP + phosphate + H(+)</text>
        <dbReference type="Rhea" id="RHEA:19669"/>
        <dbReference type="ChEBI" id="CHEBI:15377"/>
        <dbReference type="ChEBI" id="CHEBI:15378"/>
        <dbReference type="ChEBI" id="CHEBI:37565"/>
        <dbReference type="ChEBI" id="CHEBI:43474"/>
        <dbReference type="ChEBI" id="CHEBI:58189"/>
    </reaction>
    <physiologicalReaction direction="left-to-right" evidence="1">
        <dbReference type="Rhea" id="RHEA:19670"/>
    </physiologicalReaction>
</comment>
<comment type="subcellular location">
    <subcellularLocation>
        <location evidence="1">Cytoplasm</location>
    </subcellularLocation>
</comment>
<comment type="similarity">
    <text evidence="2">Belongs to the TRAFAC class translation factor GTPase superfamily. Classic translation factor GTPase family. EF-G/EF-2 subfamily.</text>
</comment>
<dbReference type="EC" id="3.6.5.-" evidence="1"/>
<dbReference type="EMBL" id="AY144923">
    <property type="protein sequence ID" value="AAO32487.1"/>
    <property type="molecule type" value="Genomic_DNA"/>
</dbReference>
<dbReference type="EMBL" id="HE576759">
    <property type="protein sequence ID" value="CCC71533.1"/>
    <property type="molecule type" value="Genomic_DNA"/>
</dbReference>
<dbReference type="SMR" id="Q875Z2"/>
<dbReference type="FunCoup" id="Q875Z2">
    <property type="interactions" value="1388"/>
</dbReference>
<dbReference type="STRING" id="1064592.Q875Z2"/>
<dbReference type="KEGG" id="ncs:NCAS_0H02230"/>
<dbReference type="eggNOG" id="KOG0469">
    <property type="taxonomic scope" value="Eukaryota"/>
</dbReference>
<dbReference type="HOGENOM" id="CLU_002794_11_2_1"/>
<dbReference type="InParanoid" id="Q875Z2"/>
<dbReference type="OMA" id="DSMESAW"/>
<dbReference type="OrthoDB" id="364892at2759"/>
<dbReference type="Proteomes" id="UP000001640">
    <property type="component" value="Chromosome 8"/>
</dbReference>
<dbReference type="GO" id="GO:0005829">
    <property type="term" value="C:cytosol"/>
    <property type="evidence" value="ECO:0007669"/>
    <property type="project" value="TreeGrafter"/>
</dbReference>
<dbReference type="GO" id="GO:1990904">
    <property type="term" value="C:ribonucleoprotein complex"/>
    <property type="evidence" value="ECO:0007669"/>
    <property type="project" value="TreeGrafter"/>
</dbReference>
<dbReference type="GO" id="GO:0005525">
    <property type="term" value="F:GTP binding"/>
    <property type="evidence" value="ECO:0007669"/>
    <property type="project" value="UniProtKB-KW"/>
</dbReference>
<dbReference type="GO" id="GO:0003924">
    <property type="term" value="F:GTPase activity"/>
    <property type="evidence" value="ECO:0007669"/>
    <property type="project" value="InterPro"/>
</dbReference>
<dbReference type="GO" id="GO:0043022">
    <property type="term" value="F:ribosome binding"/>
    <property type="evidence" value="ECO:0007669"/>
    <property type="project" value="TreeGrafter"/>
</dbReference>
<dbReference type="GO" id="GO:0003746">
    <property type="term" value="F:translation elongation factor activity"/>
    <property type="evidence" value="ECO:0007669"/>
    <property type="project" value="UniProtKB-KW"/>
</dbReference>
<dbReference type="CDD" id="cd01681">
    <property type="entry name" value="aeEF2_snRNP_like_IV"/>
    <property type="match status" value="1"/>
</dbReference>
<dbReference type="CDD" id="cd04096">
    <property type="entry name" value="eEF2_snRNP_like_C"/>
    <property type="match status" value="1"/>
</dbReference>
<dbReference type="CDD" id="cd01885">
    <property type="entry name" value="EF2"/>
    <property type="match status" value="1"/>
</dbReference>
<dbReference type="CDD" id="cd16261">
    <property type="entry name" value="EF2_snRNP_III"/>
    <property type="match status" value="1"/>
</dbReference>
<dbReference type="CDD" id="cd03700">
    <property type="entry name" value="EF2_snRNP_like_II"/>
    <property type="match status" value="1"/>
</dbReference>
<dbReference type="FunFam" id="3.90.1430.10:FF:000003">
    <property type="entry name" value="Elongation factor 2"/>
    <property type="match status" value="1"/>
</dbReference>
<dbReference type="FunFam" id="2.40.30.10:FF:000010">
    <property type="entry name" value="Translation elongation factor 2"/>
    <property type="match status" value="1"/>
</dbReference>
<dbReference type="FunFam" id="3.30.230.10:FF:000006">
    <property type="entry name" value="Translation elongation factor 2"/>
    <property type="match status" value="1"/>
</dbReference>
<dbReference type="FunFam" id="3.30.70.240:FF:000003">
    <property type="entry name" value="Translation elongation factor 2"/>
    <property type="match status" value="1"/>
</dbReference>
<dbReference type="FunFam" id="3.30.70.870:FF:000002">
    <property type="entry name" value="Translation elongation factor 2"/>
    <property type="match status" value="1"/>
</dbReference>
<dbReference type="FunFam" id="3.40.50.300:FF:000058">
    <property type="entry name" value="Translation elongation factor 2"/>
    <property type="match status" value="1"/>
</dbReference>
<dbReference type="Gene3D" id="3.30.230.10">
    <property type="match status" value="1"/>
</dbReference>
<dbReference type="Gene3D" id="3.30.70.240">
    <property type="match status" value="1"/>
</dbReference>
<dbReference type="Gene3D" id="3.30.70.870">
    <property type="entry name" value="Elongation Factor G (Translational Gtpase), domain 3"/>
    <property type="match status" value="1"/>
</dbReference>
<dbReference type="Gene3D" id="3.40.50.300">
    <property type="entry name" value="P-loop containing nucleotide triphosphate hydrolases"/>
    <property type="match status" value="1"/>
</dbReference>
<dbReference type="Gene3D" id="2.40.30.10">
    <property type="entry name" value="Translation factors"/>
    <property type="match status" value="1"/>
</dbReference>
<dbReference type="InterPro" id="IPR041095">
    <property type="entry name" value="EFG_II"/>
</dbReference>
<dbReference type="InterPro" id="IPR035647">
    <property type="entry name" value="EFG_III/V"/>
</dbReference>
<dbReference type="InterPro" id="IPR000640">
    <property type="entry name" value="EFG_V-like"/>
</dbReference>
<dbReference type="InterPro" id="IPR004161">
    <property type="entry name" value="EFTu-like_2"/>
</dbReference>
<dbReference type="InterPro" id="IPR031157">
    <property type="entry name" value="G_TR_CS"/>
</dbReference>
<dbReference type="InterPro" id="IPR027417">
    <property type="entry name" value="P-loop_NTPase"/>
</dbReference>
<dbReference type="InterPro" id="IPR020568">
    <property type="entry name" value="Ribosomal_Su5_D2-typ_SF"/>
</dbReference>
<dbReference type="InterPro" id="IPR014721">
    <property type="entry name" value="Ribsml_uS5_D2-typ_fold_subgr"/>
</dbReference>
<dbReference type="InterPro" id="IPR005225">
    <property type="entry name" value="Small_GTP-bd"/>
</dbReference>
<dbReference type="InterPro" id="IPR000795">
    <property type="entry name" value="T_Tr_GTP-bd_dom"/>
</dbReference>
<dbReference type="InterPro" id="IPR009000">
    <property type="entry name" value="Transl_B-barrel_sf"/>
</dbReference>
<dbReference type="InterPro" id="IPR005517">
    <property type="entry name" value="Transl_elong_EFG/EF2_IV"/>
</dbReference>
<dbReference type="NCBIfam" id="TIGR00231">
    <property type="entry name" value="small_GTP"/>
    <property type="match status" value="1"/>
</dbReference>
<dbReference type="PANTHER" id="PTHR42908:SF10">
    <property type="entry name" value="EUKARYOTIC TRANSLATION ELONGATION FACTOR 2"/>
    <property type="match status" value="1"/>
</dbReference>
<dbReference type="PANTHER" id="PTHR42908">
    <property type="entry name" value="TRANSLATION ELONGATION FACTOR-RELATED"/>
    <property type="match status" value="1"/>
</dbReference>
<dbReference type="Pfam" id="PF00679">
    <property type="entry name" value="EFG_C"/>
    <property type="match status" value="1"/>
</dbReference>
<dbReference type="Pfam" id="PF14492">
    <property type="entry name" value="EFG_III"/>
    <property type="match status" value="1"/>
</dbReference>
<dbReference type="Pfam" id="PF03764">
    <property type="entry name" value="EFG_IV"/>
    <property type="match status" value="1"/>
</dbReference>
<dbReference type="Pfam" id="PF00009">
    <property type="entry name" value="GTP_EFTU"/>
    <property type="match status" value="1"/>
</dbReference>
<dbReference type="Pfam" id="PF03144">
    <property type="entry name" value="GTP_EFTU_D2"/>
    <property type="match status" value="1"/>
</dbReference>
<dbReference type="PRINTS" id="PR00315">
    <property type="entry name" value="ELONGATNFCT"/>
</dbReference>
<dbReference type="SMART" id="SM00838">
    <property type="entry name" value="EFG_C"/>
    <property type="match status" value="1"/>
</dbReference>
<dbReference type="SMART" id="SM00889">
    <property type="entry name" value="EFG_IV"/>
    <property type="match status" value="1"/>
</dbReference>
<dbReference type="SUPFAM" id="SSF54980">
    <property type="entry name" value="EF-G C-terminal domain-like"/>
    <property type="match status" value="2"/>
</dbReference>
<dbReference type="SUPFAM" id="SSF52540">
    <property type="entry name" value="P-loop containing nucleoside triphosphate hydrolases"/>
    <property type="match status" value="1"/>
</dbReference>
<dbReference type="SUPFAM" id="SSF54211">
    <property type="entry name" value="Ribosomal protein S5 domain 2-like"/>
    <property type="match status" value="1"/>
</dbReference>
<dbReference type="SUPFAM" id="SSF50447">
    <property type="entry name" value="Translation proteins"/>
    <property type="match status" value="1"/>
</dbReference>
<dbReference type="PROSITE" id="PS00301">
    <property type="entry name" value="G_TR_1"/>
    <property type="match status" value="1"/>
</dbReference>
<dbReference type="PROSITE" id="PS51722">
    <property type="entry name" value="G_TR_2"/>
    <property type="match status" value="1"/>
</dbReference>
<keyword id="KW-0963">Cytoplasm</keyword>
<keyword id="KW-0251">Elongation factor</keyword>
<keyword id="KW-0342">GTP-binding</keyword>
<keyword id="KW-0378">Hydrolase</keyword>
<keyword id="KW-0547">Nucleotide-binding</keyword>
<keyword id="KW-0648">Protein biosynthesis</keyword>
<keyword id="KW-1185">Reference proteome</keyword>
<feature type="chain" id="PRO_0000091021" description="Elongation factor 2">
    <location>
        <begin position="1"/>
        <end position="842"/>
    </location>
</feature>
<feature type="domain" description="tr-type G" evidence="2">
    <location>
        <begin position="17"/>
        <end position="253"/>
    </location>
</feature>
<feature type="binding site" evidence="1">
    <location>
        <begin position="26"/>
        <end position="33"/>
    </location>
    <ligand>
        <name>GTP</name>
        <dbReference type="ChEBI" id="CHEBI:37565"/>
    </ligand>
</feature>
<feature type="binding site" evidence="1">
    <location>
        <begin position="158"/>
        <end position="161"/>
    </location>
    <ligand>
        <name>GTP</name>
        <dbReference type="ChEBI" id="CHEBI:37565"/>
    </ligand>
</feature>
<feature type="binding site" evidence="1">
    <location>
        <begin position="213"/>
        <end position="215"/>
    </location>
    <ligand>
        <name>GTP</name>
        <dbReference type="ChEBI" id="CHEBI:37565"/>
    </ligand>
</feature>
<feature type="modified residue" description="Diphthamide" evidence="1">
    <location>
        <position position="699"/>
    </location>
</feature>
<name>EF2_NAUCA</name>
<evidence type="ECO:0000250" key="1">
    <source>
        <dbReference type="UniProtKB" id="P32324"/>
    </source>
</evidence>
<evidence type="ECO:0000255" key="2">
    <source>
        <dbReference type="PROSITE-ProRule" id="PRU01059"/>
    </source>
</evidence>
<protein>
    <recommendedName>
        <fullName>Elongation factor 2</fullName>
        <shortName>EF-2</shortName>
        <ecNumber evidence="1">3.6.5.-</ecNumber>
    </recommendedName>
</protein>
<sequence>MVAFTVDQMRSLMDTVTNVRNMSVIAHVDHGKSTLTDSLVQKAGIISAAKAGEARFMDTRKDEQERGITIKSTAISLYSEMPDEDVKDIAQNTEGNAFLINLIDSPGHVDFSSEVTAALRVTDGALVVVDTVEGVCVQTETVLRQALGERIKPVVCINKVDRALLELQVSKEDLYQSFSRTVESVNVIISTYADEILGDVQVYPSKGTVAFGSGLHGWAFTIRQFAQRYAKKFGVDKVKMMERLWGDSYFNPKTKKWTNKETDADGKQLERAFNMFVLDPIFRLFAAIMNFKKDEIPVLLEKLEINLKGDEKDQEGKALLKTVMKKFLPAADALLEMIVMNLPSPVTAQAYRAEQLYEGPADDANCMAIKRCDPKADLMLYVSKMVPTSDKGRFYAFGRVFAGTVRSGQKVRIQGPNYVPGKKDDLFVKAIQRVVLMMGRFVEPIDDCPAGNIIGLVGIDQFLLKSGTLTTDETAHNMKVMKFSVSPVVQVAVEVKNANDLPKLVEGLKRLSKSDPCVLTYMAETGEHIVAGTGELHLEICLQDLENDHAGVPLKISPPVVAYRETVETESSQTALSKSPNKHNRIYLKAEPIEEEVSLAIESGKINPRDDLKARARVMADEFGWDVTDARKIWCFGPDGNGPNLVVDQTKAVQYLNEIKDSVVAAFQWATKEGPIFGEQMRSVRVNILDVTLHADAIHRGGGQIIPTMRRATYAGFLLAEPKIQEPVFLVEIQCPESAVGGIYSVLNKKRGQVVSEEQRPGTPLFTVKAYLPVNESFGFTGELRQATGGQAFPQMVFDHWATLGSDPLDPTSKAGEIVTAARKRHGMKEVVPGWQEYYDKL</sequence>
<accession>Q875Z2</accession>
<accession>G0VJ54</accession>
<reference key="1">
    <citation type="journal article" date="2003" name="Nature">
        <title>Yeast genome duplication was followed by asynchronous differentiation of duplicated genes.</title>
        <authorList>
            <person name="Langkjaer R.B."/>
            <person name="Cliften P.F."/>
            <person name="Johnston M."/>
            <person name="Piskur J."/>
        </authorList>
    </citation>
    <scope>NUCLEOTIDE SEQUENCE [GENOMIC DNA]</scope>
    <source>
        <strain>ATCC 76901 / BCRC 22586 / CBS 4309 / NBRC 1992 / NRRL Y-12630</strain>
    </source>
</reference>
<reference key="2">
    <citation type="submission" date="2011-07" db="EMBL/GenBank/DDBJ databases">
        <title>Genome sequence of Naumovozyma castellii.</title>
        <authorList>
            <person name="Gordon J.L."/>
            <person name="Armisen D."/>
            <person name="Proux-Wera E."/>
            <person name="OhEigeartaigh S.S."/>
            <person name="Byrne K.P."/>
            <person name="Wolfe K.H."/>
        </authorList>
    </citation>
    <scope>NUCLEOTIDE SEQUENCE [LARGE SCALE GENOMIC DNA]</scope>
    <source>
        <strain>ATCC 76901 / BCRC 22586 / CBS 4309 / NBRC 1992 / NRRL Y-12630</strain>
    </source>
</reference>
<organism>
    <name type="scientific">Naumovozyma castellii</name>
    <name type="common">Yeast</name>
    <name type="synonym">Saccharomyces castellii</name>
    <dbReference type="NCBI Taxonomy" id="27288"/>
    <lineage>
        <taxon>Eukaryota</taxon>
        <taxon>Fungi</taxon>
        <taxon>Dikarya</taxon>
        <taxon>Ascomycota</taxon>
        <taxon>Saccharomycotina</taxon>
        <taxon>Saccharomycetes</taxon>
        <taxon>Saccharomycetales</taxon>
        <taxon>Saccharomycetaceae</taxon>
        <taxon>Naumovozyma</taxon>
    </lineage>
</organism>
<proteinExistence type="inferred from homology"/>
<gene>
    <name type="primary">EFT1</name>
    <name type="ordered locus">NCAS_0H02230</name>
</gene>